<name>SEPF_STRPC</name>
<organism>
    <name type="scientific">Streptococcus pyogenes serotype M12 (strain MGAS9429)</name>
    <dbReference type="NCBI Taxonomy" id="370551"/>
    <lineage>
        <taxon>Bacteria</taxon>
        <taxon>Bacillati</taxon>
        <taxon>Bacillota</taxon>
        <taxon>Bacilli</taxon>
        <taxon>Lactobacillales</taxon>
        <taxon>Streptococcaceae</taxon>
        <taxon>Streptococcus</taxon>
    </lineage>
</organism>
<sequence length="218" mass="25219">MAFKDTFNKMISYFDTDEVNEVEEDVAASTDNVIPRSQQSVRASSHPKQEPRNNHVQQDHQARSQEQTRSQMHPKHGTSERYYQQSQPKEGHEMVDRRKRMSTSGIANRREQYQQSTCSDQTTIALKYPRKYEDAQEIVDLLIVNECVLIDFQFMLDAQARRCLDFIDGASKVLYGSLQKVGSSMYLLAPSNVSVNIEEMTIPHTTQDIGFDFDMKRR</sequence>
<gene>
    <name evidence="1" type="primary">sepF</name>
    <name type="ordered locus">MGAS9429_Spy1242</name>
</gene>
<dbReference type="EMBL" id="CP000259">
    <property type="protein sequence ID" value="ABF32429.1"/>
    <property type="status" value="ALT_INIT"/>
    <property type="molecule type" value="Genomic_DNA"/>
</dbReference>
<dbReference type="RefSeq" id="WP_011018004.1">
    <property type="nucleotide sequence ID" value="NC_008021.1"/>
</dbReference>
<dbReference type="SMR" id="Q1JKZ0"/>
<dbReference type="KEGG" id="spk:MGAS9429_Spy1242"/>
<dbReference type="HOGENOM" id="CLU_078499_2_0_9"/>
<dbReference type="Proteomes" id="UP000002433">
    <property type="component" value="Chromosome"/>
</dbReference>
<dbReference type="GO" id="GO:0005737">
    <property type="term" value="C:cytoplasm"/>
    <property type="evidence" value="ECO:0007669"/>
    <property type="project" value="UniProtKB-SubCell"/>
</dbReference>
<dbReference type="GO" id="GO:0000917">
    <property type="term" value="P:division septum assembly"/>
    <property type="evidence" value="ECO:0007669"/>
    <property type="project" value="UniProtKB-KW"/>
</dbReference>
<dbReference type="GO" id="GO:0043093">
    <property type="term" value="P:FtsZ-dependent cytokinesis"/>
    <property type="evidence" value="ECO:0007669"/>
    <property type="project" value="UniProtKB-UniRule"/>
</dbReference>
<dbReference type="Gene3D" id="3.30.110.150">
    <property type="entry name" value="SepF-like protein"/>
    <property type="match status" value="1"/>
</dbReference>
<dbReference type="HAMAP" id="MF_01197">
    <property type="entry name" value="SepF"/>
    <property type="match status" value="1"/>
</dbReference>
<dbReference type="InterPro" id="IPR023052">
    <property type="entry name" value="Cell_div_SepF"/>
</dbReference>
<dbReference type="InterPro" id="IPR007561">
    <property type="entry name" value="Cell_div_SepF/SepF-rel"/>
</dbReference>
<dbReference type="InterPro" id="IPR038594">
    <property type="entry name" value="SepF-like_sf"/>
</dbReference>
<dbReference type="PANTHER" id="PTHR35798">
    <property type="entry name" value="CELL DIVISION PROTEIN SEPF"/>
    <property type="match status" value="1"/>
</dbReference>
<dbReference type="PANTHER" id="PTHR35798:SF1">
    <property type="entry name" value="CELL DIVISION PROTEIN SEPF"/>
    <property type="match status" value="1"/>
</dbReference>
<dbReference type="Pfam" id="PF04472">
    <property type="entry name" value="SepF"/>
    <property type="match status" value="1"/>
</dbReference>
<keyword id="KW-0131">Cell cycle</keyword>
<keyword id="KW-0132">Cell division</keyword>
<keyword id="KW-0963">Cytoplasm</keyword>
<keyword id="KW-0717">Septation</keyword>
<evidence type="ECO:0000255" key="1">
    <source>
        <dbReference type="HAMAP-Rule" id="MF_01197"/>
    </source>
</evidence>
<evidence type="ECO:0000256" key="2">
    <source>
        <dbReference type="SAM" id="MobiDB-lite"/>
    </source>
</evidence>
<evidence type="ECO:0000305" key="3"/>
<proteinExistence type="inferred from homology"/>
<protein>
    <recommendedName>
        <fullName evidence="1">Cell division protein SepF</fullName>
    </recommendedName>
</protein>
<accession>Q1JKZ0</accession>
<comment type="function">
    <text evidence="1">Cell division protein that is part of the divisome complex and is recruited early to the Z-ring. Probably stimulates Z-ring formation, perhaps through the cross-linking of FtsZ protofilaments. Its function overlaps with FtsA.</text>
</comment>
<comment type="subunit">
    <text evidence="1">Homodimer. Interacts with FtsZ.</text>
</comment>
<comment type="subcellular location">
    <subcellularLocation>
        <location evidence="1">Cytoplasm</location>
    </subcellularLocation>
    <text evidence="1">Localizes to the division site, in a FtsZ-dependent manner.</text>
</comment>
<comment type="similarity">
    <text evidence="1">Belongs to the SepF family.</text>
</comment>
<comment type="sequence caution" evidence="3">
    <conflict type="erroneous initiation">
        <sequence resource="EMBL-CDS" id="ABF32429"/>
    </conflict>
</comment>
<reference key="1">
    <citation type="journal article" date="2006" name="Proc. Natl. Acad. Sci. U.S.A.">
        <title>Molecular genetic anatomy of inter- and intraserotype variation in the human bacterial pathogen group A Streptococcus.</title>
        <authorList>
            <person name="Beres S.B."/>
            <person name="Richter E.W."/>
            <person name="Nagiec M.J."/>
            <person name="Sumby P."/>
            <person name="Porcella S.F."/>
            <person name="DeLeo F.R."/>
            <person name="Musser J.M."/>
        </authorList>
    </citation>
    <scope>NUCLEOTIDE SEQUENCE [LARGE SCALE GENOMIC DNA]</scope>
    <source>
        <strain>MGAS9429</strain>
    </source>
</reference>
<feature type="chain" id="PRO_0000334101" description="Cell division protein SepF">
    <location>
        <begin position="1"/>
        <end position="218"/>
    </location>
</feature>
<feature type="region of interest" description="Disordered" evidence="2">
    <location>
        <begin position="25"/>
        <end position="115"/>
    </location>
</feature>
<feature type="compositionally biased region" description="Polar residues" evidence="2">
    <location>
        <begin position="29"/>
        <end position="43"/>
    </location>
</feature>
<feature type="compositionally biased region" description="Basic and acidic residues" evidence="2">
    <location>
        <begin position="47"/>
        <end position="63"/>
    </location>
</feature>